<keyword id="KW-0002">3D-structure</keyword>
<keyword id="KW-0106">Calcium</keyword>
<keyword id="KW-0378">Hydrolase</keyword>
<keyword id="KW-0479">Metal-binding</keyword>
<dbReference type="EC" id="3.8.2.2"/>
<dbReference type="PDB" id="1E1A">
    <property type="method" value="X-ray"/>
    <property type="resolution" value="1.80 A"/>
    <property type="chains" value="A=1-314"/>
</dbReference>
<dbReference type="PDB" id="1PJX">
    <property type="method" value="X-ray"/>
    <property type="resolution" value="0.85 A"/>
    <property type="chains" value="A=1-314"/>
</dbReference>
<dbReference type="PDB" id="2GVU">
    <property type="method" value="X-ray"/>
    <property type="resolution" value="2.00 A"/>
    <property type="chains" value="A=1-314"/>
</dbReference>
<dbReference type="PDB" id="2GVV">
    <property type="method" value="X-ray"/>
    <property type="resolution" value="1.73 A"/>
    <property type="chains" value="A=1-314"/>
</dbReference>
<dbReference type="PDB" id="2GVW">
    <property type="method" value="X-ray"/>
    <property type="resolution" value="1.86 A"/>
    <property type="chains" value="A=1-314"/>
</dbReference>
<dbReference type="PDB" id="2GVX">
    <property type="method" value="X-ray"/>
    <property type="resolution" value="2.00 A"/>
    <property type="chains" value="A=1-314"/>
</dbReference>
<dbReference type="PDB" id="2IAO">
    <property type="method" value="X-ray"/>
    <property type="resolution" value="2.00 A"/>
    <property type="chains" value="A=3-314"/>
</dbReference>
<dbReference type="PDB" id="2IAP">
    <property type="method" value="X-ray"/>
    <property type="resolution" value="1.90 A"/>
    <property type="chains" value="A=3-314"/>
</dbReference>
<dbReference type="PDB" id="2IAQ">
    <property type="method" value="X-ray"/>
    <property type="resolution" value="2.10 A"/>
    <property type="chains" value="A=3-314"/>
</dbReference>
<dbReference type="PDB" id="2IAR">
    <property type="method" value="X-ray"/>
    <property type="resolution" value="1.90 A"/>
    <property type="chains" value="A=3-314"/>
</dbReference>
<dbReference type="PDB" id="2IAS">
    <property type="method" value="X-ray"/>
    <property type="resolution" value="2.00 A"/>
    <property type="chains" value="A=3-314"/>
</dbReference>
<dbReference type="PDB" id="2IAT">
    <property type="method" value="X-ray"/>
    <property type="resolution" value="1.90 A"/>
    <property type="chains" value="A=3-314"/>
</dbReference>
<dbReference type="PDB" id="2IAU">
    <property type="method" value="X-ray"/>
    <property type="resolution" value="2.00 A"/>
    <property type="chains" value="A=3-314"/>
</dbReference>
<dbReference type="PDB" id="2IAV">
    <property type="method" value="X-ray"/>
    <property type="resolution" value="1.07 A"/>
    <property type="chains" value="A=3-314"/>
</dbReference>
<dbReference type="PDB" id="2IAW">
    <property type="method" value="X-ray"/>
    <property type="resolution" value="1.74 A"/>
    <property type="chains" value="A=3-314"/>
</dbReference>
<dbReference type="PDB" id="2IAX">
    <property type="method" value="X-ray"/>
    <property type="resolution" value="1.10 A"/>
    <property type="chains" value="A=3-314"/>
</dbReference>
<dbReference type="PDB" id="3BYC">
    <property type="method" value="X-ray"/>
    <property type="resolution" value="2.20 A"/>
    <property type="chains" value="A=1-314"/>
</dbReference>
<dbReference type="PDB" id="3HLH">
    <property type="method" value="X-ray"/>
    <property type="resolution" value="1.80 A"/>
    <property type="chains" value="A/B/C/D=1-314"/>
</dbReference>
<dbReference type="PDB" id="3HLI">
    <property type="method" value="X-ray"/>
    <property type="resolution" value="1.40 A"/>
    <property type="chains" value="A/B/C/D=1-314"/>
</dbReference>
<dbReference type="PDB" id="3I1C">
    <property type="method" value="X-ray"/>
    <property type="resolution" value="2.20 A"/>
    <property type="chains" value="A=1-314"/>
</dbReference>
<dbReference type="PDB" id="3KGG">
    <property type="method" value="X-ray"/>
    <property type="resolution" value="2.10 A"/>
    <property type="chains" value="A=1-314"/>
</dbReference>
<dbReference type="PDB" id="3LI3">
    <property type="method" value="X-ray"/>
    <property type="resolution" value="1.66 A"/>
    <property type="chains" value="A=1-314"/>
</dbReference>
<dbReference type="PDB" id="3LI4">
    <property type="method" value="X-ray"/>
    <property type="resolution" value="1.35 A"/>
    <property type="chains" value="A=1-314"/>
</dbReference>
<dbReference type="PDB" id="3LI5">
    <property type="method" value="X-ray"/>
    <property type="resolution" value="1.36 A"/>
    <property type="chains" value="A=1-314"/>
</dbReference>
<dbReference type="PDB" id="3O4P">
    <property type="method" value="X-ray"/>
    <property type="resolution" value="0.85 A"/>
    <property type="chains" value="A=1-314"/>
</dbReference>
<dbReference type="PDB" id="3U0S">
    <property type="method" value="X-ray"/>
    <property type="resolution" value="2.60 A"/>
    <property type="chains" value="A/B=1-314"/>
</dbReference>
<dbReference type="PDB" id="4O5S">
    <property type="method" value="X-ray"/>
    <property type="resolution" value="1.80 A"/>
    <property type="chains" value="A/B=1-314"/>
</dbReference>
<dbReference type="PDB" id="4O5T">
    <property type="method" value="X-ray"/>
    <property type="resolution" value="2.90 A"/>
    <property type="chains" value="A/B=1-314"/>
</dbReference>
<dbReference type="PDB" id="7ZP5">
    <property type="method" value="X-ray"/>
    <property type="resolution" value="1.54 A"/>
    <property type="chains" value="A/B=1-314"/>
</dbReference>
<dbReference type="PDB" id="7ZP6">
    <property type="method" value="X-ray"/>
    <property type="resolution" value="1.90 A"/>
    <property type="chains" value="A=1-314"/>
</dbReference>
<dbReference type="PDB" id="7ZP7">
    <property type="method" value="X-ray"/>
    <property type="resolution" value="1.70 A"/>
    <property type="chains" value="A/B=1-310"/>
</dbReference>
<dbReference type="PDBsum" id="1E1A"/>
<dbReference type="PDBsum" id="1PJX"/>
<dbReference type="PDBsum" id="2GVU"/>
<dbReference type="PDBsum" id="2GVV"/>
<dbReference type="PDBsum" id="2GVW"/>
<dbReference type="PDBsum" id="2GVX"/>
<dbReference type="PDBsum" id="2IAO"/>
<dbReference type="PDBsum" id="2IAP"/>
<dbReference type="PDBsum" id="2IAQ"/>
<dbReference type="PDBsum" id="2IAR"/>
<dbReference type="PDBsum" id="2IAS"/>
<dbReference type="PDBsum" id="2IAT"/>
<dbReference type="PDBsum" id="2IAU"/>
<dbReference type="PDBsum" id="2IAV"/>
<dbReference type="PDBsum" id="2IAW"/>
<dbReference type="PDBsum" id="2IAX"/>
<dbReference type="PDBsum" id="3BYC"/>
<dbReference type="PDBsum" id="3HLH"/>
<dbReference type="PDBsum" id="3HLI"/>
<dbReference type="PDBsum" id="3I1C"/>
<dbReference type="PDBsum" id="3KGG"/>
<dbReference type="PDBsum" id="3LI3"/>
<dbReference type="PDBsum" id="3LI4"/>
<dbReference type="PDBsum" id="3LI5"/>
<dbReference type="PDBsum" id="3O4P"/>
<dbReference type="PDBsum" id="3U0S"/>
<dbReference type="PDBsum" id="4O5S"/>
<dbReference type="PDBsum" id="4O5T"/>
<dbReference type="PDBsum" id="7ZP5"/>
<dbReference type="PDBsum" id="7ZP6"/>
<dbReference type="PDBsum" id="7ZP7"/>
<dbReference type="BMRB" id="Q7SIG4"/>
<dbReference type="SMR" id="Q7SIG4"/>
<dbReference type="BRENDA" id="3.1.8.2">
    <property type="organism ID" value="3066"/>
</dbReference>
<dbReference type="SABIO-RK" id="Q7SIG4"/>
<dbReference type="EvolutionaryTrace" id="Q7SIG4"/>
<dbReference type="GO" id="GO:0005509">
    <property type="term" value="F:calcium ion binding"/>
    <property type="evidence" value="ECO:0000314"/>
    <property type="project" value="UniProtKB"/>
</dbReference>
<dbReference type="GO" id="GO:0047862">
    <property type="term" value="F:diisopropyl-fluorophosphatase activity"/>
    <property type="evidence" value="ECO:0000314"/>
    <property type="project" value="UniProtKB"/>
</dbReference>
<dbReference type="Gene3D" id="2.120.10.30">
    <property type="entry name" value="TolB, C-terminal domain"/>
    <property type="match status" value="1"/>
</dbReference>
<dbReference type="InterPro" id="IPR011042">
    <property type="entry name" value="6-blade_b-propeller_TolB-like"/>
</dbReference>
<dbReference type="InterPro" id="IPR013658">
    <property type="entry name" value="SGL"/>
</dbReference>
<dbReference type="InterPro" id="IPR051262">
    <property type="entry name" value="SMP-30/CGR1_Lactonase"/>
</dbReference>
<dbReference type="PANTHER" id="PTHR47572:SF4">
    <property type="entry name" value="LACTONASE DRP35"/>
    <property type="match status" value="1"/>
</dbReference>
<dbReference type="PANTHER" id="PTHR47572">
    <property type="entry name" value="LIPOPROTEIN-RELATED"/>
    <property type="match status" value="1"/>
</dbReference>
<dbReference type="Pfam" id="PF08450">
    <property type="entry name" value="SGL"/>
    <property type="match status" value="1"/>
</dbReference>
<dbReference type="SUPFAM" id="SSF63829">
    <property type="entry name" value="Calcium-dependent phosphotriesterase"/>
    <property type="match status" value="1"/>
</dbReference>
<accession>Q7SIG4</accession>
<sequence length="314" mass="35080">MEIPVIEPLFTKVTEDIPGAEGPVFDKNGDFYIVAPEVEVNGKPAGEILRIDLKTGKKTVICKPEVNGYGGIPAGCQCDRDANQLFVADMRLGLLVVQTDGTFEEIAKKDSEGRRMQGCNDCAFDYEGNLWITAPAGEVAPADYTRSMQEKFGSIYCFTTDGQMIQVDTAFQFPNGIAVRHMNDGRPYQLIVAETPTKKLWSYDIKGPAKIENKKVWGHIPGTHEGGADGMDFDEDNNLLVANWGSSHIEVFGPDGGQPKMRIRCPFEKPSNLHFKPQTKTIFVTEHENNAVWKFEWQRNGKKQYCETLKFGIF</sequence>
<proteinExistence type="evidence at protein level"/>
<feature type="chain" id="PRO_0000248834" description="Diisopropyl-fluorophosphatase">
    <location>
        <begin position="1"/>
        <end position="314"/>
    </location>
</feature>
<feature type="active site" description="Proton acceptor" evidence="6">
    <location>
        <position position="287"/>
    </location>
</feature>
<feature type="binding site" evidence="7">
    <location>
        <position position="21"/>
    </location>
    <ligand>
        <name>Ca(2+)</name>
        <dbReference type="ChEBI" id="CHEBI:29108"/>
        <label>1</label>
        <note>catalytic</note>
    </ligand>
</feature>
<feature type="binding site" evidence="7">
    <location>
        <position position="120"/>
    </location>
    <ligand>
        <name>Ca(2+)</name>
        <dbReference type="ChEBI" id="CHEBI:29108"/>
        <label>1</label>
        <note>catalytic</note>
    </ligand>
</feature>
<feature type="binding site" evidence="7">
    <location>
        <position position="175"/>
    </location>
    <ligand>
        <name>Ca(2+)</name>
        <dbReference type="ChEBI" id="CHEBI:29108"/>
        <label>1</label>
        <note>catalytic</note>
    </ligand>
</feature>
<feature type="binding site" evidence="7">
    <location>
        <position position="229"/>
    </location>
    <ligand>
        <name>Ca(2+)</name>
        <dbReference type="ChEBI" id="CHEBI:29108"/>
        <label>1</label>
        <note>catalytic</note>
    </ligand>
</feature>
<feature type="binding site" evidence="4 5">
    <location>
        <position position="232"/>
    </location>
    <ligand>
        <name>Ca(2+)</name>
        <dbReference type="ChEBI" id="CHEBI:29108"/>
        <label>2</label>
    </ligand>
</feature>
<feature type="binding site" evidence="4 5">
    <location>
        <position position="273"/>
    </location>
    <ligand>
        <name>Ca(2+)</name>
        <dbReference type="ChEBI" id="CHEBI:29108"/>
        <label>2</label>
    </ligand>
</feature>
<feature type="binding site" evidence="4 5">
    <location>
        <position position="274"/>
    </location>
    <ligand>
        <name>Ca(2+)</name>
        <dbReference type="ChEBI" id="CHEBI:29108"/>
        <label>2</label>
    </ligand>
</feature>
<feature type="mutagenesis site" description="100% decrease in activity. Loss of calcium 1 binding." evidence="4">
    <original>E</original>
    <variation>Q</variation>
    <location>
        <position position="21"/>
    </location>
</feature>
<feature type="mutagenesis site" description="50% decrease in activity." evidence="4">
    <original>E</original>
    <variation>Q</variation>
    <location>
        <position position="37"/>
    </location>
</feature>
<feature type="mutagenesis site" description="100% decrease in activity." evidence="6">
    <original>Q</original>
    <variation>F</variation>
    <location>
        <position position="77"/>
    </location>
</feature>
<feature type="mutagenesis site" description="No effect on activity." evidence="6">
    <original>Q</original>
    <variation>W</variation>
    <location>
        <position position="77"/>
    </location>
</feature>
<feature type="mutagenesis site" description="6% increase in activity." evidence="6">
    <original>Q</original>
    <variation>Y</variation>
    <location>
        <position position="77"/>
    </location>
</feature>
<feature type="mutagenesis site" description="96% decrease in activity. 100% decrease in activity; when associated with N-229." evidence="6">
    <original>N</original>
    <variation>D</variation>
    <location>
        <position position="120"/>
    </location>
</feature>
<feature type="mutagenesis site" description="100% decrease in activity." evidence="6">
    <original>D</original>
    <variation>F</variation>
    <location>
        <position position="121"/>
    </location>
</feature>
<feature type="mutagenesis site" description="8% increase in activity." evidence="6">
    <original>Y</original>
    <variation>S</variation>
    <location>
        <position position="144"/>
    </location>
</feature>
<feature type="mutagenesis site" description="45% decrease in activity." evidence="6">
    <original>R</original>
    <variation>S</variation>
    <location>
        <position position="146"/>
    </location>
</feature>
<feature type="mutagenesis site" description="26% decrease in activity." evidence="6">
    <original>M</original>
    <variation>A</variation>
    <location>
        <position position="148"/>
    </location>
</feature>
<feature type="mutagenesis site" description="84% decrease in activity." evidence="6">
    <original>F</original>
    <variation>A</variation>
    <location>
        <position position="173"/>
    </location>
</feature>
<feature type="mutagenesis site" description="28% decrease in activity." evidence="6">
    <original>F</original>
    <variation>L</variation>
    <location>
        <position position="173"/>
    </location>
</feature>
<feature type="mutagenesis site" description="68% decrease in activity." evidence="6">
    <original>F</original>
    <variation>S</variation>
    <location>
        <position position="173"/>
    </location>
</feature>
<feature type="mutagenesis site" description="46% decrease in activity." evidence="6">
    <original>F</original>
    <variation>V</variation>
    <location>
        <position position="173"/>
    </location>
</feature>
<feature type="mutagenesis site" description="19% decrease in activity." evidence="6">
    <original>F</original>
    <variation>W</variation>
    <location>
        <position position="173"/>
    </location>
</feature>
<feature type="mutagenesis site" description="53% decrease in activity." evidence="6">
    <original>F</original>
    <variation>Y</variation>
    <location>
        <position position="173"/>
    </location>
</feature>
<feature type="mutagenesis site" description="98% decrease in activity." evidence="6">
    <original>N</original>
    <variation>D</variation>
    <location>
        <position position="175"/>
    </location>
</feature>
<feature type="mutagenesis site" description="20% decrease in activity." evidence="3 6">
    <original>H</original>
    <variation>N</variation>
    <location>
        <position position="181"/>
    </location>
</feature>
<feature type="mutagenesis site" description="60% decrease in activity." evidence="6">
    <original>T</original>
    <variation>A</variation>
    <location>
        <position position="195"/>
    </location>
</feature>
<feature type="mutagenesis site" description="11% decrease in activity." evidence="6">
    <original>T</original>
    <variation>L</variation>
    <location>
        <position position="195"/>
    </location>
</feature>
<feature type="mutagenesis site" description="3% decrease in activity." evidence="6">
    <original>T</original>
    <variation>V</variation>
    <location>
        <position position="195"/>
    </location>
</feature>
<feature type="mutagenesis site" description="3% increase in activity." evidence="3">
    <original>H</original>
    <variation>N</variation>
    <location>
        <position position="219"/>
    </location>
</feature>
<feature type="mutagenesis site" description="14% increase in activity." evidence="3">
    <original>H</original>
    <variation>N</variation>
    <location>
        <position position="224"/>
    </location>
</feature>
<feature type="mutagenesis site" description="100% decrease in activity. Loss of calcium 1 binding. 100% decrease in activity; when associated with D-120." evidence="4 6">
    <original>D</original>
    <variation>N</variation>
    <location>
        <position position="229"/>
    </location>
</feature>
<feature type="mutagenesis site" description="3% increase in activity. 19% decrease in activity; when associated with A-271." evidence="6">
    <original>D</original>
    <variation>S</variation>
    <location>
        <position position="232"/>
    </location>
</feature>
<feature type="mutagenesis site" description="4% decrease in activity." evidence="6">
    <original>N</original>
    <variation>S</variation>
    <location>
        <position position="237"/>
    </location>
</feature>
<feature type="mutagenesis site" description="44% decrease in activity." evidence="4">
    <original>W</original>
    <variation>F</variation>
    <location>
        <position position="244"/>
    </location>
</feature>
<feature type="mutagenesis site" description="27% decrease in activity." evidence="4">
    <original>W</original>
    <variation>H</variation>
    <location>
        <position position="244"/>
    </location>
</feature>
<feature type="mutagenesis site" description="62% decrease in activity." evidence="4">
    <original>W</original>
    <variation>L</variation>
    <location>
        <position position="244"/>
    </location>
</feature>
<feature type="mutagenesis site" description="No effect on activity." evidence="4">
    <original>W</original>
    <variation>Y</variation>
    <location>
        <position position="244"/>
    </location>
</feature>
<feature type="mutagenesis site" description="4% increase in activity." evidence="3">
    <original>H</original>
    <variation>N</variation>
    <location>
        <position position="248"/>
    </location>
</feature>
<feature type="mutagenesis site" description="30% increase in activity. 19% decrease in activity; when associated with S-232." evidence="4 6">
    <original>S</original>
    <variation>A</variation>
    <location>
        <position position="271"/>
    </location>
</feature>
<feature type="mutagenesis site" description="100% decrease in activity." evidence="6">
    <original>N</original>
    <variation>F</variation>
    <location>
        <position position="272"/>
    </location>
</feature>
<feature type="mutagenesis site" description="85% decrease in activity." evidence="3 6">
    <original>H</original>
    <variation>N</variation>
    <location>
        <position position="274"/>
    </location>
</feature>
<feature type="mutagenesis site" description="90% decrease in activity." evidence="3 6">
    <original>H</original>
    <variation>A</variation>
    <location>
        <position position="287"/>
    </location>
</feature>
<feature type="mutagenesis site" description="36% decrease in activity." evidence="3 6">
    <original>H</original>
    <variation>F</variation>
    <location>
        <position position="287"/>
    </location>
</feature>
<feature type="mutagenesis site" description="21% decrease in activity." evidence="3 6">
    <original>H</original>
    <variation>L</variation>
    <location>
        <position position="287"/>
    </location>
</feature>
<feature type="mutagenesis site" description="97% decrease in activity." evidence="3 6">
    <original>H</original>
    <variation>N</variation>
    <location>
        <position position="287"/>
    </location>
</feature>
<feature type="mutagenesis site" description="54% decrease in activity." evidence="3 6">
    <original>H</original>
    <variation>Q</variation>
    <location>
        <position position="287"/>
    </location>
</feature>
<feature type="mutagenesis site" description="44% decrease in activity." evidence="3 6">
    <original>H</original>
    <variation>W</variation>
    <location>
        <position position="287"/>
    </location>
</feature>
<feature type="mutagenesis site" description="57% decrease in activity." evidence="3 6">
    <original>H</original>
    <variation>Y</variation>
    <location>
        <position position="287"/>
    </location>
</feature>
<feature type="mutagenesis site" description="50% decrease in activity." evidence="6">
    <original>Q</original>
    <variation>F</variation>
    <location>
        <position position="304"/>
    </location>
</feature>
<feature type="mutagenesis site" description="3% decrease in activity." evidence="6">
    <original>Q</original>
    <variation>W</variation>
    <location>
        <position position="304"/>
    </location>
</feature>
<feature type="mutagenesis site" description="3% increase in activity." evidence="6">
    <original>F</original>
    <variation>A</variation>
    <location>
        <position position="314"/>
    </location>
</feature>
<feature type="strand" evidence="10">
    <location>
        <begin position="11"/>
        <end position="14"/>
    </location>
</feature>
<feature type="strand" evidence="10">
    <location>
        <begin position="21"/>
        <end position="25"/>
    </location>
</feature>
<feature type="strand" evidence="10">
    <location>
        <begin position="31"/>
        <end position="35"/>
    </location>
</feature>
<feature type="helix" evidence="14">
    <location>
        <begin position="36"/>
        <end position="45"/>
    </location>
</feature>
<feature type="strand" evidence="10">
    <location>
        <begin position="47"/>
        <end position="51"/>
    </location>
</feature>
<feature type="turn" evidence="10">
    <location>
        <begin position="53"/>
        <end position="55"/>
    </location>
</feature>
<feature type="strand" evidence="10">
    <location>
        <begin position="58"/>
        <end position="62"/>
    </location>
</feature>
<feature type="strand" evidence="10">
    <location>
        <begin position="73"/>
        <end position="78"/>
    </location>
</feature>
<feature type="strand" evidence="10">
    <location>
        <begin position="80"/>
        <end position="89"/>
    </location>
</feature>
<feature type="turn" evidence="10">
    <location>
        <begin position="90"/>
        <end position="92"/>
    </location>
</feature>
<feature type="strand" evidence="10">
    <location>
        <begin position="93"/>
        <end position="98"/>
    </location>
</feature>
<feature type="turn" evidence="11">
    <location>
        <begin position="99"/>
        <end position="101"/>
    </location>
</feature>
<feature type="strand" evidence="10">
    <location>
        <begin position="103"/>
        <end position="105"/>
    </location>
</feature>
<feature type="strand" evidence="10">
    <location>
        <begin position="121"/>
        <end position="124"/>
    </location>
</feature>
<feature type="strand" evidence="10">
    <location>
        <begin position="130"/>
        <end position="134"/>
    </location>
</feature>
<feature type="strand" evidence="15">
    <location>
        <begin position="136"/>
        <end position="138"/>
    </location>
</feature>
<feature type="strand" evidence="10">
    <location>
        <begin position="149"/>
        <end position="151"/>
    </location>
</feature>
<feature type="strand" evidence="10">
    <location>
        <begin position="153"/>
        <end position="158"/>
    </location>
</feature>
<feature type="strand" evidence="10">
    <location>
        <begin position="164"/>
        <end position="181"/>
    </location>
</feature>
<feature type="strand" evidence="10">
    <location>
        <begin position="187"/>
        <end position="194"/>
    </location>
</feature>
<feature type="turn" evidence="10">
    <location>
        <begin position="195"/>
        <end position="198"/>
    </location>
</feature>
<feature type="strand" evidence="10">
    <location>
        <begin position="199"/>
        <end position="207"/>
    </location>
</feature>
<feature type="strand" evidence="10">
    <location>
        <begin position="210"/>
        <end position="219"/>
    </location>
</feature>
<feature type="strand" evidence="12">
    <location>
        <begin position="223"/>
        <end position="225"/>
    </location>
</feature>
<feature type="strand" evidence="10">
    <location>
        <begin position="227"/>
        <end position="234"/>
    </location>
</feature>
<feature type="strand" evidence="10">
    <location>
        <begin position="239"/>
        <end position="244"/>
    </location>
</feature>
<feature type="turn" evidence="10">
    <location>
        <begin position="245"/>
        <end position="247"/>
    </location>
</feature>
<feature type="strand" evidence="10">
    <location>
        <begin position="248"/>
        <end position="252"/>
    </location>
</feature>
<feature type="strand" evidence="10">
    <location>
        <begin position="260"/>
        <end position="264"/>
    </location>
</feature>
<feature type="strand" evidence="10">
    <location>
        <begin position="266"/>
        <end position="268"/>
    </location>
</feature>
<feature type="strand" evidence="10">
    <location>
        <begin position="270"/>
        <end position="275"/>
    </location>
</feature>
<feature type="strand" evidence="10">
    <location>
        <begin position="279"/>
        <end position="286"/>
    </location>
</feature>
<feature type="turn" evidence="10">
    <location>
        <begin position="287"/>
        <end position="290"/>
    </location>
</feature>
<feature type="strand" evidence="10">
    <location>
        <begin position="291"/>
        <end position="296"/>
    </location>
</feature>
<feature type="helix" evidence="10">
    <location>
        <begin position="305"/>
        <end position="307"/>
    </location>
</feature>
<feature type="strand" evidence="13">
    <location>
        <begin position="310"/>
        <end position="312"/>
    </location>
</feature>
<protein>
    <recommendedName>
        <fullName>Diisopropyl-fluorophosphatase</fullName>
        <shortName>DFPase</shortName>
        <ecNumber>3.8.2.2</ecNumber>
    </recommendedName>
</protein>
<name>DFPA_LOLVU</name>
<evidence type="ECO:0000269" key="1">
    <source>
    </source>
</evidence>
<evidence type="ECO:0000269" key="2">
    <source>
    </source>
</evidence>
<evidence type="ECO:0000269" key="3">
    <source>
    </source>
</evidence>
<evidence type="ECO:0000269" key="4">
    <source>
    </source>
</evidence>
<evidence type="ECO:0000269" key="5">
    <source>
    </source>
</evidence>
<evidence type="ECO:0000269" key="6">
    <source>
    </source>
</evidence>
<evidence type="ECO:0000305" key="7"/>
<evidence type="ECO:0000312" key="8">
    <source>
        <dbReference type="PDB" id="1E1A"/>
    </source>
</evidence>
<evidence type="ECO:0000312" key="9">
    <source>
        <dbReference type="PDB" id="1PJX"/>
    </source>
</evidence>
<evidence type="ECO:0007829" key="10">
    <source>
        <dbReference type="PDB" id="1PJX"/>
    </source>
</evidence>
<evidence type="ECO:0007829" key="11">
    <source>
        <dbReference type="PDB" id="3HLH"/>
    </source>
</evidence>
<evidence type="ECO:0007829" key="12">
    <source>
        <dbReference type="PDB" id="3LI3"/>
    </source>
</evidence>
<evidence type="ECO:0007829" key="13">
    <source>
        <dbReference type="PDB" id="3LI4"/>
    </source>
</evidence>
<evidence type="ECO:0007829" key="14">
    <source>
        <dbReference type="PDB" id="4O5S"/>
    </source>
</evidence>
<evidence type="ECO:0007829" key="15">
    <source>
        <dbReference type="PDB" id="7ZP7"/>
    </source>
</evidence>
<organism>
    <name type="scientific">Loligo vulgaris</name>
    <name type="common">Common European squid</name>
    <dbReference type="NCBI Taxonomy" id="6622"/>
    <lineage>
        <taxon>Eukaryota</taxon>
        <taxon>Metazoa</taxon>
        <taxon>Spiralia</taxon>
        <taxon>Lophotrochozoa</taxon>
        <taxon>Mollusca</taxon>
        <taxon>Cephalopoda</taxon>
        <taxon>Coleoidea</taxon>
        <taxon>Decapodiformes</taxon>
        <taxon>Myopsida</taxon>
        <taxon>Loliginidae</taxon>
        <taxon>Loligo</taxon>
    </lineage>
</organism>
<comment type="function">
    <text evidence="6">Biological function and substrate unknown. However, it is capable of acting on phosphorus anhydride bonds (such as phosphorus-halide and phosphorus-cyanide) in organophosphorus compounds (including nerve gases).</text>
</comment>
<comment type="catalytic activity">
    <reaction evidence="2 3">
        <text>diisopropyl fluorophosphate + H2O = diisopropyl phosphate + fluoride + 2 H(+)</text>
        <dbReference type="Rhea" id="RHEA:24100"/>
        <dbReference type="ChEBI" id="CHEBI:15377"/>
        <dbReference type="ChEBI" id="CHEBI:15378"/>
        <dbReference type="ChEBI" id="CHEBI:17051"/>
        <dbReference type="ChEBI" id="CHEBI:17941"/>
        <dbReference type="ChEBI" id="CHEBI:57896"/>
        <dbReference type="EC" id="3.8.2.2"/>
    </reaction>
</comment>
<comment type="cofactor">
    <cofactor evidence="2 4 5">
        <name>Ca(2+)</name>
        <dbReference type="ChEBI" id="CHEBI:29108"/>
    </cofactor>
    <text evidence="2 4 5">Binds 2 calcium ions per subunit.</text>
</comment>
<comment type="activity regulation">
    <text evidence="2">Inhibited by chelating agents.</text>
</comment>
<comment type="biophysicochemical properties">
    <kinetics>
        <KM evidence="3">0.54 mM for diisopropyl-fluorophosphate (in the presence of 10 mM NaCl)</KM>
        <KM evidence="3">0.42 mM for diisopropyl-fluorophosphate (in the presence of 100 mM NaCl)</KM>
        <KM evidence="3">0.34 mM for diisopropyl-fluorophosphate (in the presence of 200 mM NaCl)</KM>
        <KM evidence="3">0.25 mM for diisopropyl-fluorophosphate (in the presence of 500 mM NaCl)</KM>
        <KM evidence="3">0.17 mM for diisopropyl-fluorophosphate (in the presence of 1000 mM NaCl)</KM>
        <Vmax evidence="3">130.0 umol/min/mg enzyme (in the presence of 10 mM NaCl)</Vmax>
        <Vmax evidence="3">170.0 umol/min/mg enzyme (in the presence of 100 mM NaCl)</Vmax>
        <Vmax evidence="3">307.0 umol/min/mg enzyme (in the presence of 200 mM NaCl)</Vmax>
        <Vmax evidence="3">326.0 umol/min/mg enzyme (in the presence of 500 mM NaCl)</Vmax>
        <Vmax evidence="3">214.0 umol/min/mg enzyme (in the presence of 1000 mM NaCl)</Vmax>
    </kinetics>
    <phDependence>
        <text evidence="3">Optimum pH is 8.0.</text>
    </phDependence>
    <temperatureDependence>
        <text evidence="3">Optimum temperature is 35 degrees Celsius.</text>
    </temperatureDependence>
</comment>
<comment type="subunit">
    <text evidence="4 5">Monomer.</text>
</comment>
<comment type="biotechnology">
    <text evidence="1">Has potential application in bio-remediation by detoxification of organo-phosphates used in insecticides or nerve agents used in chemical warfare such as soman, tabun and sarin.</text>
</comment>
<reference evidence="7" key="1">
    <citation type="journal article" date="2001" name="Biochim. Biophys. Acta">
        <title>Insights into the reaction mechanism of the diisopropyl fluorophosphatase from Loligo vulgaris by means of kinetic studies, chemical modification and site-directed mutagenesis.</title>
        <authorList>
            <person name="Hartleib J."/>
            <person name="Rueterjans H."/>
        </authorList>
    </citation>
    <scope>BIOPHYSICOCHEMICAL PROPERTIES</scope>
    <scope>MUTAGENESIS OF HIS-181; HIS-219; HIS-224; HIS-248; HIS-274 AND HIS-287</scope>
</reference>
<reference evidence="7" key="2">
    <citation type="journal article" date="2001" name="Biochem. J.">
        <title>Role of calcium ions in the structure and function of the di-isopropylfluorophosphatase from Loligo vulgaris.</title>
        <authorList>
            <person name="Hartleib J."/>
            <person name="Geschwindner S."/>
            <person name="Scharff E.I."/>
            <person name="Rueterjans H."/>
        </authorList>
    </citation>
    <scope>CATALYTIC ACTIVITY</scope>
    <scope>COFACTOR</scope>
    <scope>ACTIVITY REGULATION</scope>
</reference>
<reference evidence="7" key="3">
    <citation type="journal article" date="2005" name="Biochemistry">
        <title>Mutational and structural studies of the diisopropylfluorophosphatase from Loligo vulgaris shed new light on the catalytic mechanism of the enzyme.</title>
        <authorList>
            <person name="Katsemi V."/>
            <person name="Luecke C."/>
            <person name="Koepke J."/>
            <person name="Lohr F."/>
            <person name="Maurer S."/>
            <person name="Fritzsch G."/>
            <person name="Rueterjans H."/>
        </authorList>
    </citation>
    <scope>FUNCTION</scope>
    <scope>MUTAGENESIS OF GLN-77; ASN-120; ASP-121; TYR-144; ARG-146; MET-148; PHE-173; ASN-175; HIS-181; THR-195; ASP-229; ASP-232; ASN-237; SER-271; ASN-272; HIS-274; HIS-287; GLN-304 AND PHE-314</scope>
</reference>
<reference evidence="7 8" key="4">
    <citation type="journal article" date="2001" name="Acta Crystallogr. D">
        <title>Crystallization and preliminary X-ray crystallographic analysis of DFPase from Loligo vulgaris.</title>
        <authorList>
            <person name="Scharff E.I."/>
            <person name="Lucke C."/>
            <person name="Fritzsch G."/>
            <person name="Koepke J."/>
            <person name="Hartleib J."/>
            <person name="Dierl S."/>
            <person name="Rueterjans H."/>
        </authorList>
    </citation>
    <scope>CRYSTALLIZATION</scope>
    <scope>X-RAY CRYSTALLOGRAPHY (1.8 ANGSTROMS)</scope>
    <scope>BIOTECHNOLOGY</scope>
</reference>
<reference evidence="7" key="5">
    <citation type="journal article" date="2001" name="Structure">
        <title>Crystal structure of diisopropylfluorophosphatase from Loligo vulgaris.</title>
        <authorList>
            <person name="Scharff E.I."/>
            <person name="Koepke J."/>
            <person name="Fritzsch G."/>
            <person name="Lucke C."/>
            <person name="Rueterjans H."/>
        </authorList>
    </citation>
    <scope>X-RAY CRYSTALLOGRAPHY (1.8 ANGSTROMS)</scope>
    <scope>COFACTOR</scope>
    <scope>SUBUNIT</scope>
    <scope>MUTAGENESIS OF GLU-21; GLU-37; ASP-229; TRP-244 AND SER-271</scope>
</reference>
<reference evidence="7 9" key="6">
    <citation type="journal article" date="2003" name="Acta Crystallogr. D">
        <title>Statistical analysis of crystallographic data obtained from squid ganglion DFPase at 0.85 A resolution.</title>
        <authorList>
            <person name="Koepke J."/>
            <person name="Scharff E.I."/>
            <person name="Lucke C."/>
            <person name="Rueterjans H."/>
            <person name="Fritzsch G."/>
        </authorList>
    </citation>
    <scope>X-RAY CRYSTALLOGRAPHY (0.85 ANGSTROMS)</scope>
    <scope>COFACTOR</scope>
    <scope>SUBUNIT</scope>
</reference>